<name>CMLE_NEUCR</name>
<keyword id="KW-0002">3D-structure</keyword>
<keyword id="KW-0903">Direct protein sequencing</keyword>
<keyword id="KW-0413">Isomerase</keyword>
<keyword id="KW-1185">Reference proteome</keyword>
<sequence length="366" mass="41329">MPLHHLMIGTWTPPGAIFTVQFDDEKLTCKLIKRTEIPQDEPISWMTFDHERKNIYGAAMKKWSSFAVKSPTEIVHEASHPIGGHPRANDADTNTRAIFLLAAKQPPYAVYANPFYKFAGYGNVFSVSETGKLEKNVQNYEYQENTGIHGMVFDPTETYLYSADLTANKLWTHRKLASGEVELVGSVDAPDPGDHPRWVAMHPTGNYLYALMEAGNRICEYVIDPATHMPVYTHHSFPLIPPGIPDRDPETGKGLYRADVCALTFSGKYMFASSRANKFELQGYIAGFKLRDCGSIEKQLFLSPTPTSGGHSNAVSPCPWSDEWMAITDDQEGWLEIYRWKDEFLHRVARVRIPEPGFGMNAIWYD</sequence>
<accession>P38677</accession>
<accession>Q7RV80</accession>
<reference key="1">
    <citation type="journal article" date="1994" name="J. Bacteriol.">
        <title>3-carboxy-cis,cis-muconate lactonizing enzyme from Neurospora crassa: an alternate cycloisomerase motif.</title>
        <authorList>
            <person name="Mazur P."/>
            <person name="Henzel W.J."/>
            <person name="Mattoo S."/>
            <person name="Kozarich J.W."/>
        </authorList>
    </citation>
    <scope>NUCLEOTIDE SEQUENCE [MRNA]</scope>
    <scope>PROTEIN SEQUENCE OF 2-41</scope>
    <scope>CHARACTERIZATION</scope>
    <source>
        <strain>ATCC 24698 / 74-OR23-1A / CBS 708.71 / DSM 1257 / FGSC 987</strain>
    </source>
</reference>
<reference key="2">
    <citation type="journal article" date="2003" name="Nature">
        <title>The genome sequence of the filamentous fungus Neurospora crassa.</title>
        <authorList>
            <person name="Galagan J.E."/>
            <person name="Calvo S.E."/>
            <person name="Borkovich K.A."/>
            <person name="Selker E.U."/>
            <person name="Read N.D."/>
            <person name="Jaffe D.B."/>
            <person name="FitzHugh W."/>
            <person name="Ma L.-J."/>
            <person name="Smirnov S."/>
            <person name="Purcell S."/>
            <person name="Rehman B."/>
            <person name="Elkins T."/>
            <person name="Engels R."/>
            <person name="Wang S."/>
            <person name="Nielsen C.B."/>
            <person name="Butler J."/>
            <person name="Endrizzi M."/>
            <person name="Qui D."/>
            <person name="Ianakiev P."/>
            <person name="Bell-Pedersen D."/>
            <person name="Nelson M.A."/>
            <person name="Werner-Washburne M."/>
            <person name="Selitrennikoff C.P."/>
            <person name="Kinsey J.A."/>
            <person name="Braun E.L."/>
            <person name="Zelter A."/>
            <person name="Schulte U."/>
            <person name="Kothe G.O."/>
            <person name="Jedd G."/>
            <person name="Mewes H.-W."/>
            <person name="Staben C."/>
            <person name="Marcotte E."/>
            <person name="Greenberg D."/>
            <person name="Roy A."/>
            <person name="Foley K."/>
            <person name="Naylor J."/>
            <person name="Stange-Thomann N."/>
            <person name="Barrett R."/>
            <person name="Gnerre S."/>
            <person name="Kamal M."/>
            <person name="Kamvysselis M."/>
            <person name="Mauceli E.W."/>
            <person name="Bielke C."/>
            <person name="Rudd S."/>
            <person name="Frishman D."/>
            <person name="Krystofova S."/>
            <person name="Rasmussen C."/>
            <person name="Metzenberg R.L."/>
            <person name="Perkins D.D."/>
            <person name="Kroken S."/>
            <person name="Cogoni C."/>
            <person name="Macino G."/>
            <person name="Catcheside D.E.A."/>
            <person name="Li W."/>
            <person name="Pratt R.J."/>
            <person name="Osmani S.A."/>
            <person name="DeSouza C.P.C."/>
            <person name="Glass N.L."/>
            <person name="Orbach M.J."/>
            <person name="Berglund J.A."/>
            <person name="Voelker R."/>
            <person name="Yarden O."/>
            <person name="Plamann M."/>
            <person name="Seiler S."/>
            <person name="Dunlap J.C."/>
            <person name="Radford A."/>
            <person name="Aramayo R."/>
            <person name="Natvig D.O."/>
            <person name="Alex L.A."/>
            <person name="Mannhaupt G."/>
            <person name="Ebbole D.J."/>
            <person name="Freitag M."/>
            <person name="Paulsen I."/>
            <person name="Sachs M.S."/>
            <person name="Lander E.S."/>
            <person name="Nusbaum C."/>
            <person name="Birren B.W."/>
        </authorList>
    </citation>
    <scope>NUCLEOTIDE SEQUENCE [LARGE SCALE GENOMIC DNA]</scope>
    <source>
        <strain>ATCC 24698 / 74-OR23-1A / CBS 708.71 / DSM 1257 / FGSC 987</strain>
    </source>
</reference>
<reference key="3">
    <citation type="journal article" date="2002" name="Structure">
        <title>The structure of Neurospora crassa 3-carboxy-cis,cis-muconate lactonizing enzyme, a beta propeller cycloisomerase.</title>
        <authorList>
            <person name="Kajander T."/>
            <person name="Merckel M.C."/>
            <person name="Thompson A."/>
            <person name="Deacon A.M."/>
            <person name="Mazur P."/>
            <person name="Kozarich J.W."/>
            <person name="Goldman A."/>
        </authorList>
    </citation>
    <scope>X-RAY CRYSTALLOGRAPHY (2.5 ANGSTROMS)</scope>
</reference>
<dbReference type="EC" id="5.5.1.5"/>
<dbReference type="EMBL" id="L27538">
    <property type="protein sequence ID" value="AAA21020.1"/>
    <property type="molecule type" value="mRNA"/>
</dbReference>
<dbReference type="EMBL" id="CM002241">
    <property type="protein sequence ID" value="EAA28450.1"/>
    <property type="molecule type" value="Genomic_DNA"/>
</dbReference>
<dbReference type="PIR" id="A55525">
    <property type="entry name" value="A55525"/>
</dbReference>
<dbReference type="PDB" id="1JOF">
    <property type="method" value="X-ray"/>
    <property type="resolution" value="2.50 A"/>
    <property type="chains" value="A/B/C/D/E/F/G/H=2-366"/>
</dbReference>
<dbReference type="PDBsum" id="1JOF"/>
<dbReference type="SMR" id="P38677"/>
<dbReference type="STRING" id="367110.P38677"/>
<dbReference type="PaxDb" id="5141-EFNCRP00000003530"/>
<dbReference type="EnsemblFungi" id="EAA28450">
    <property type="protein sequence ID" value="EAA28450"/>
    <property type="gene ID" value="NCU04071"/>
</dbReference>
<dbReference type="KEGG" id="ncr:NCU04071"/>
<dbReference type="VEuPathDB" id="FungiDB:NCU04071"/>
<dbReference type="HOGENOM" id="CLU_045869_0_0_1"/>
<dbReference type="InParanoid" id="P38677"/>
<dbReference type="OMA" id="VQNYEYQ"/>
<dbReference type="OrthoDB" id="1715191at2759"/>
<dbReference type="UniPathway" id="UPA00157">
    <property type="reaction ID" value="UER00308"/>
</dbReference>
<dbReference type="EvolutionaryTrace" id="P38677"/>
<dbReference type="Proteomes" id="UP000001805">
    <property type="component" value="Chromosome 5, Linkage Group VI"/>
</dbReference>
<dbReference type="GO" id="GO:0017057">
    <property type="term" value="F:6-phosphogluconolactonase activity"/>
    <property type="evidence" value="ECO:0000318"/>
    <property type="project" value="GO_Central"/>
</dbReference>
<dbReference type="GO" id="GO:0047768">
    <property type="term" value="F:carboxy-cis,cis-muconate cyclase activity"/>
    <property type="evidence" value="ECO:0007669"/>
    <property type="project" value="UniProtKB-EC"/>
</dbReference>
<dbReference type="GO" id="GO:0042952">
    <property type="term" value="P:beta-ketoadipate pathway"/>
    <property type="evidence" value="ECO:0007669"/>
    <property type="project" value="UniProtKB-UniPathway"/>
</dbReference>
<dbReference type="FunFam" id="2.130.10.10:FF:000244">
    <property type="entry name" value="Carboxy-cis,cis-muconate cyclase"/>
    <property type="match status" value="1"/>
</dbReference>
<dbReference type="Gene3D" id="2.130.10.10">
    <property type="entry name" value="YVTN repeat-like/Quinoprotein amine dehydrogenase"/>
    <property type="match status" value="1"/>
</dbReference>
<dbReference type="InterPro" id="IPR050282">
    <property type="entry name" value="Cycloisomerase_2"/>
</dbReference>
<dbReference type="InterPro" id="IPR019405">
    <property type="entry name" value="Lactonase_7-beta_prop"/>
</dbReference>
<dbReference type="InterPro" id="IPR015943">
    <property type="entry name" value="WD40/YVTN_repeat-like_dom_sf"/>
</dbReference>
<dbReference type="PANTHER" id="PTHR30344">
    <property type="entry name" value="6-PHOSPHOGLUCONOLACTONASE-RELATED"/>
    <property type="match status" value="1"/>
</dbReference>
<dbReference type="PANTHER" id="PTHR30344:SF4">
    <property type="entry name" value="CYCLASE, PUTATIVE (AFU_ORTHOLOGUE AFUA_6G11580)-RELATED"/>
    <property type="match status" value="1"/>
</dbReference>
<dbReference type="Pfam" id="PF10282">
    <property type="entry name" value="Lactonase"/>
    <property type="match status" value="1"/>
</dbReference>
<dbReference type="SUPFAM" id="SSF75011">
    <property type="entry name" value="3-carboxy-cis,cis-mucoante lactonizing enzyme"/>
    <property type="match status" value="1"/>
</dbReference>
<organism>
    <name type="scientific">Neurospora crassa (strain ATCC 24698 / 74-OR23-1A / CBS 708.71 / DSM 1257 / FGSC 987)</name>
    <dbReference type="NCBI Taxonomy" id="367110"/>
    <lineage>
        <taxon>Eukaryota</taxon>
        <taxon>Fungi</taxon>
        <taxon>Dikarya</taxon>
        <taxon>Ascomycota</taxon>
        <taxon>Pezizomycotina</taxon>
        <taxon>Sordariomycetes</taxon>
        <taxon>Sordariomycetidae</taxon>
        <taxon>Sordariales</taxon>
        <taxon>Sordariaceae</taxon>
        <taxon>Neurospora</taxon>
    </lineage>
</organism>
<feature type="initiator methionine" description="Removed" evidence="1">
    <location>
        <position position="1"/>
    </location>
</feature>
<feature type="chain" id="PRO_0000171127" description="Carboxy-cis,cis-muconate cyclase">
    <location>
        <begin position="2"/>
        <end position="366"/>
    </location>
</feature>
<feature type="active site">
    <location>
        <position position="149"/>
    </location>
</feature>
<feature type="active site">
    <location>
        <position position="197"/>
    </location>
</feature>
<feature type="active site">
    <location>
        <position position="213"/>
    </location>
</feature>
<feature type="active site">
    <location>
        <position position="275"/>
    </location>
</feature>
<feature type="strand" evidence="3">
    <location>
        <begin position="3"/>
        <end position="14"/>
    </location>
</feature>
<feature type="strand" evidence="3">
    <location>
        <begin position="16"/>
        <end position="23"/>
    </location>
</feature>
<feature type="turn" evidence="3">
    <location>
        <begin position="24"/>
        <end position="27"/>
    </location>
</feature>
<feature type="strand" evidence="3">
    <location>
        <begin position="28"/>
        <end position="36"/>
    </location>
</feature>
<feature type="strand" evidence="3">
    <location>
        <begin position="44"/>
        <end position="48"/>
    </location>
</feature>
<feature type="strand" evidence="3">
    <location>
        <begin position="52"/>
        <end position="60"/>
    </location>
</feature>
<feature type="strand" evidence="3">
    <location>
        <begin position="62"/>
        <end position="70"/>
    </location>
</feature>
<feature type="strand" evidence="3">
    <location>
        <begin position="73"/>
        <end position="81"/>
    </location>
</feature>
<feature type="helix" evidence="3">
    <location>
        <begin position="86"/>
        <end position="89"/>
    </location>
</feature>
<feature type="strand" evidence="3">
    <location>
        <begin position="96"/>
        <end position="102"/>
    </location>
</feature>
<feature type="strand" evidence="3">
    <location>
        <begin position="110"/>
        <end position="118"/>
    </location>
</feature>
<feature type="strand" evidence="3">
    <location>
        <begin position="121"/>
        <end position="127"/>
    </location>
</feature>
<feature type="strand" evidence="3">
    <location>
        <begin position="133"/>
        <end position="141"/>
    </location>
</feature>
<feature type="strand" evidence="3">
    <location>
        <begin position="148"/>
        <end position="153"/>
    </location>
</feature>
<feature type="strand" evidence="3">
    <location>
        <begin position="157"/>
        <end position="164"/>
    </location>
</feature>
<feature type="turn" evidence="3">
    <location>
        <begin position="165"/>
        <end position="168"/>
    </location>
</feature>
<feature type="strand" evidence="3">
    <location>
        <begin position="169"/>
        <end position="175"/>
    </location>
</feature>
<feature type="strand" evidence="3">
    <location>
        <begin position="181"/>
        <end position="188"/>
    </location>
</feature>
<feature type="strand" evidence="3">
    <location>
        <begin position="196"/>
        <end position="201"/>
    </location>
</feature>
<feature type="strand" evidence="3">
    <location>
        <begin position="205"/>
        <end position="212"/>
    </location>
</feature>
<feature type="turn" evidence="3">
    <location>
        <begin position="213"/>
        <end position="216"/>
    </location>
</feature>
<feature type="strand" evidence="3">
    <location>
        <begin position="217"/>
        <end position="223"/>
    </location>
</feature>
<feature type="turn" evidence="3">
    <location>
        <begin position="225"/>
        <end position="227"/>
    </location>
</feature>
<feature type="strand" evidence="3">
    <location>
        <begin position="230"/>
        <end position="240"/>
    </location>
</feature>
<feature type="turn" evidence="3">
    <location>
        <begin position="249"/>
        <end position="251"/>
    </location>
</feature>
<feature type="strand" evidence="3">
    <location>
        <begin position="252"/>
        <end position="263"/>
    </location>
</feature>
<feature type="strand" evidence="3">
    <location>
        <begin position="267"/>
        <end position="278"/>
    </location>
</feature>
<feature type="strand" evidence="3">
    <location>
        <begin position="284"/>
        <end position="290"/>
    </location>
</feature>
<feature type="strand" evidence="3">
    <location>
        <begin position="296"/>
        <end position="304"/>
    </location>
</feature>
<feature type="strand" evidence="3">
    <location>
        <begin position="315"/>
        <end position="317"/>
    </location>
</feature>
<feature type="strand" evidence="3">
    <location>
        <begin position="324"/>
        <end position="328"/>
    </location>
</feature>
<feature type="strand" evidence="3">
    <location>
        <begin position="330"/>
        <end position="332"/>
    </location>
</feature>
<feature type="strand" evidence="3">
    <location>
        <begin position="334"/>
        <end position="341"/>
    </location>
</feature>
<feature type="strand" evidence="3">
    <location>
        <begin position="344"/>
        <end position="352"/>
    </location>
</feature>
<feature type="strand" evidence="3">
    <location>
        <begin position="358"/>
        <end position="365"/>
    </location>
</feature>
<protein>
    <recommendedName>
        <fullName>Carboxy-cis,cis-muconate cyclase</fullName>
        <ecNumber>5.5.1.5</ecNumber>
    </recommendedName>
    <alternativeName>
        <fullName>3-carboxy-cis,cis-muconate lactonizing enzyme</fullName>
        <shortName>CMLE</shortName>
    </alternativeName>
</protein>
<evidence type="ECO:0000269" key="1">
    <source>
    </source>
</evidence>
<evidence type="ECO:0000305" key="2"/>
<evidence type="ECO:0007829" key="3">
    <source>
        <dbReference type="PDB" id="1JOF"/>
    </source>
</evidence>
<proteinExistence type="evidence at protein level"/>
<gene>
    <name type="ORF">NCU04071</name>
</gene>
<comment type="function">
    <text>Catalyzes a syn cycloisomerization. Also possesses mle activity.</text>
</comment>
<comment type="catalytic activity">
    <reaction>
        <text>3-carboxy-2,5-dihydro-5-oxofuran-2-acetate = 3-carboxy-cis,cis-muconate</text>
        <dbReference type="Rhea" id="RHEA:14977"/>
        <dbReference type="ChEBI" id="CHEBI:57496"/>
        <dbReference type="ChEBI" id="CHEBI:57976"/>
        <dbReference type="EC" id="5.5.1.5"/>
    </reaction>
</comment>
<comment type="pathway">
    <text>Aromatic compound metabolism; beta-ketoadipate pathway; 3-carboxy-cis,cis-muconate from 3-carboxy-2,5-dihydro-5-oxofuran-2-acetate: step 1/1.</text>
</comment>
<comment type="subunit">
    <text>Homotetramer.</text>
</comment>
<comment type="similarity">
    <text evidence="2">Belongs to the cycloisomerase 2 family.</text>
</comment>